<name>Y4GB_SINFN</name>
<gene>
    <name type="ordered locus">NGR_a03620</name>
    <name type="ORF">y4gB</name>
</gene>
<geneLocation type="plasmid">
    <name>sym pNGR234a</name>
</geneLocation>
<keyword id="KW-0614">Plasmid</keyword>
<keyword id="KW-1185">Reference proteome</keyword>
<proteinExistence type="predicted"/>
<protein>
    <recommendedName>
        <fullName>Uncharacterized protein y4gB</fullName>
    </recommendedName>
</protein>
<sequence>MTARWPDPDRAYIGRYVASLDLRSIKSRTCYRQVLHGFQDVVERHEALDQQVLLAWLRQSSDRWAATTLLHRTRIIDRFLDHFLEAAAIDHNPVEDLREACHIKQCMPVWRALISCDPEQALAQLRQPEPFGSAGRDHG</sequence>
<reference key="1">
    <citation type="journal article" date="1997" name="Nature">
        <title>Molecular basis of symbiosis between Rhizobium and legumes.</title>
        <authorList>
            <person name="Freiberg C.A."/>
            <person name="Fellay R."/>
            <person name="Bairoch A."/>
            <person name="Broughton W.J."/>
            <person name="Rosenthal A."/>
            <person name="Perret X."/>
        </authorList>
    </citation>
    <scope>NUCLEOTIDE SEQUENCE [LARGE SCALE GENOMIC DNA]</scope>
    <source>
        <strain>NBRC 101917 / NGR234</strain>
    </source>
</reference>
<reference key="2">
    <citation type="journal article" date="2009" name="Appl. Environ. Microbiol.">
        <title>Rhizobium sp. strain NGR234 possesses a remarkable number of secretion systems.</title>
        <authorList>
            <person name="Schmeisser C."/>
            <person name="Liesegang H."/>
            <person name="Krysciak D."/>
            <person name="Bakkou N."/>
            <person name="Le Quere A."/>
            <person name="Wollherr A."/>
            <person name="Heinemeyer I."/>
            <person name="Morgenstern B."/>
            <person name="Pommerening-Roeser A."/>
            <person name="Flores M."/>
            <person name="Palacios R."/>
            <person name="Brenner S."/>
            <person name="Gottschalk G."/>
            <person name="Schmitz R.A."/>
            <person name="Broughton W.J."/>
            <person name="Perret X."/>
            <person name="Strittmatter A.W."/>
            <person name="Streit W.R."/>
        </authorList>
    </citation>
    <scope>NUCLEOTIDE SEQUENCE [LARGE SCALE GENOMIC DNA]</scope>
    <source>
        <strain>NBRC 101917 / NGR234</strain>
    </source>
</reference>
<organism>
    <name type="scientific">Sinorhizobium fredii (strain NBRC 101917 / NGR234)</name>
    <dbReference type="NCBI Taxonomy" id="394"/>
    <lineage>
        <taxon>Bacteria</taxon>
        <taxon>Pseudomonadati</taxon>
        <taxon>Pseudomonadota</taxon>
        <taxon>Alphaproteobacteria</taxon>
        <taxon>Hyphomicrobiales</taxon>
        <taxon>Rhizobiaceae</taxon>
        <taxon>Sinorhizobium/Ensifer group</taxon>
        <taxon>Sinorhizobium</taxon>
    </lineage>
</organism>
<dbReference type="EMBL" id="U00090">
    <property type="protein sequence ID" value="AAB91676.1"/>
    <property type="molecule type" value="Genomic_DNA"/>
</dbReference>
<dbReference type="RefSeq" id="NP_443864.1">
    <property type="nucleotide sequence ID" value="NC_000914.2"/>
</dbReference>
<dbReference type="RefSeq" id="WP_010875375.1">
    <property type="nucleotide sequence ID" value="NC_000914.2"/>
</dbReference>
<dbReference type="SMR" id="P55458"/>
<dbReference type="KEGG" id="rhi:NGR_a03620"/>
<dbReference type="eggNOG" id="COG0582">
    <property type="taxonomic scope" value="Bacteria"/>
</dbReference>
<dbReference type="HOGENOM" id="CLU_1843530_0_0_5"/>
<dbReference type="OrthoDB" id="5464621at2"/>
<dbReference type="Proteomes" id="UP000001054">
    <property type="component" value="Plasmid pNGR234a"/>
</dbReference>
<feature type="chain" id="PRO_0000200843" description="Uncharacterized protein y4gB">
    <location>
        <begin position="1"/>
        <end position="139"/>
    </location>
</feature>
<accession>P55458</accession>